<organism>
    <name type="scientific">Zymoseptoria tritici (strain CBS 115943 / IPO323)</name>
    <name type="common">Speckled leaf blotch fungus</name>
    <name type="synonym">Septoria tritici</name>
    <dbReference type="NCBI Taxonomy" id="336722"/>
    <lineage>
        <taxon>Eukaryota</taxon>
        <taxon>Fungi</taxon>
        <taxon>Dikarya</taxon>
        <taxon>Ascomycota</taxon>
        <taxon>Pezizomycotina</taxon>
        <taxon>Dothideomycetes</taxon>
        <taxon>Dothideomycetidae</taxon>
        <taxon>Mycosphaerellales</taxon>
        <taxon>Mycosphaerellaceae</taxon>
        <taxon>Zymoseptoria</taxon>
    </lineage>
</organism>
<comment type="function">
    <text evidence="4 5">Secreted effector that enables the plant pathogenic fungus to manipulate host defenses for successful infection (PubMed:21467214, PubMed:33797163). Binds chitin and suppresses the chitin-induced reactive oxygen species (ROS) burst (PubMed:33797163). Chitin-induced polymerization of homodimers forms a contiguous Mg1LysM highly oligomeric super-complexe that is anchored to the chitin in the fungal cell wall to prevent hydrolysis by host chitinases (PubMed:33797163).</text>
</comment>
<comment type="subunit">
    <text evidence="1 5">Forms homodimers in a chitin-independent manner through interactions at the N-termini of Mgx1LysM monomers (PubMed:33797163). Homodimers are further polymerized in a chitin-dependent manner (By similarity).</text>
</comment>
<comment type="subcellular location">
    <subcellularLocation>
        <location evidence="1">Secreted</location>
    </subcellularLocation>
    <subcellularLocation>
        <location evidence="1">Secreted</location>
        <location evidence="1">Cell wall</location>
    </subcellularLocation>
</comment>
<comment type="induction">
    <text evidence="5">Expression is up-regulated during wheat colonization.</text>
</comment>
<comment type="domain">
    <text evidence="4 5">The LysM (lysin motif) domains are small globular domains involved in binding chitin in eukaryotes. Mgx1LysM contains one LysM domain.</text>
</comment>
<comment type="disruption phenotype">
    <text evidence="5">Produces no to only a few pycnidia.</text>
</comment>
<comment type="miscellaneous">
    <text evidence="8">In plants, chitin acts as a microbe-associated molecular pattern (MAMP) that is recognized by lysin motif (LysM)-containing plant cell surface-localized pattern recognition receptors (PRRs) that activate a plethora of downstream immune responses.</text>
</comment>
<comment type="similarity">
    <text evidence="8">Belongs to the secreted LysM effector family.</text>
</comment>
<protein>
    <recommendedName>
        <fullName>Secreted LysM effector Mgx1LysM</fullName>
    </recommendedName>
</protein>
<gene>
    <name evidence="7" type="primary">Mgx1LysM</name>
    <name evidence="6" type="synonym">MgxLysM</name>
</gene>
<feature type="signal peptide" evidence="2">
    <location>
        <begin position="1"/>
        <end position="18"/>
    </location>
</feature>
<feature type="chain" id="PRO_0000460742" description="Secreted LysM effector Mgx1LysM" evidence="2">
    <location>
        <begin position="19"/>
        <end position="103"/>
    </location>
</feature>
<feature type="domain" description="LysM" evidence="3">
    <location>
        <begin position="37"/>
        <end position="85"/>
    </location>
</feature>
<feature type="binding site" evidence="1">
    <location>
        <position position="44"/>
    </location>
    <ligand>
        <name>chitin</name>
        <dbReference type="ChEBI" id="CHEBI:17029"/>
    </ligand>
</feature>
<feature type="binding site" evidence="1">
    <location>
        <position position="48"/>
    </location>
    <ligand>
        <name>chitin</name>
        <dbReference type="ChEBI" id="CHEBI:17029"/>
    </ligand>
</feature>
<feature type="binding site" evidence="1">
    <location>
        <position position="75"/>
    </location>
    <ligand>
        <name>chitin</name>
        <dbReference type="ChEBI" id="CHEBI:17029"/>
    </ligand>
</feature>
<feature type="binding site" evidence="1">
    <location>
        <position position="77"/>
    </location>
    <ligand>
        <name>chitin</name>
        <dbReference type="ChEBI" id="CHEBI:17029"/>
    </ligand>
</feature>
<feature type="disulfide bond" evidence="1">
    <location>
        <begin position="31"/>
        <end position="89"/>
    </location>
</feature>
<feature type="disulfide bond" evidence="1">
    <location>
        <begin position="62"/>
        <end position="97"/>
    </location>
</feature>
<keyword id="KW-0134">Cell wall</keyword>
<keyword id="KW-1015">Disulfide bond</keyword>
<keyword id="KW-1185">Reference proteome</keyword>
<keyword id="KW-0964">Secreted</keyword>
<keyword id="KW-0732">Signal</keyword>
<dbReference type="EMBL" id="CM001203">
    <property type="status" value="NOT_ANNOTATED_CDS"/>
    <property type="molecule type" value="Genomic_DNA"/>
</dbReference>
<dbReference type="SMR" id="P9WEM2"/>
<dbReference type="Proteomes" id="UP000008062">
    <property type="component" value="Chromosome 8"/>
</dbReference>
<dbReference type="GO" id="GO:0005576">
    <property type="term" value="C:extracellular region"/>
    <property type="evidence" value="ECO:0007669"/>
    <property type="project" value="UniProtKB-SubCell"/>
</dbReference>
<dbReference type="CDD" id="cd00118">
    <property type="entry name" value="LysM"/>
    <property type="match status" value="1"/>
</dbReference>
<dbReference type="Gene3D" id="3.10.350.10">
    <property type="entry name" value="LysM domain"/>
    <property type="match status" value="1"/>
</dbReference>
<dbReference type="InterPro" id="IPR018392">
    <property type="entry name" value="LysM_dom"/>
</dbReference>
<dbReference type="InterPro" id="IPR036779">
    <property type="entry name" value="LysM_dom_sf"/>
</dbReference>
<dbReference type="Pfam" id="PF01476">
    <property type="entry name" value="LysM"/>
    <property type="match status" value="1"/>
</dbReference>
<dbReference type="SMART" id="SM00257">
    <property type="entry name" value="LysM"/>
    <property type="match status" value="1"/>
</dbReference>
<dbReference type="SUPFAM" id="SSF54106">
    <property type="entry name" value="LysM domain"/>
    <property type="match status" value="1"/>
</dbReference>
<dbReference type="PROSITE" id="PS51782">
    <property type="entry name" value="LYSM"/>
    <property type="match status" value="1"/>
</dbReference>
<proteinExistence type="evidence at protein level"/>
<evidence type="ECO:0000250" key="1">
    <source>
        <dbReference type="UniProtKB" id="F9XHX3"/>
    </source>
</evidence>
<evidence type="ECO:0000255" key="2"/>
<evidence type="ECO:0000255" key="3">
    <source>
        <dbReference type="PROSITE-ProRule" id="PRU01118"/>
    </source>
</evidence>
<evidence type="ECO:0000269" key="4">
    <source>
    </source>
</evidence>
<evidence type="ECO:0000269" key="5">
    <source>
    </source>
</evidence>
<evidence type="ECO:0000303" key="6">
    <source>
    </source>
</evidence>
<evidence type="ECO:0000303" key="7">
    <source>
    </source>
</evidence>
<evidence type="ECO:0000305" key="8"/>
<sequence>MKVTTIIAALLSVAVVDAQNNAQCRKLGLPCHATKTIPYVVKKGDTLTHIAHDIYKRKVGICDLAYTNHIGYNPDLIYEDQTLLIPTDCKTIDDGSCLKKHVS</sequence>
<reference key="1">
    <citation type="journal article" date="2011" name="PLoS Genet.">
        <title>Finished genome of the fungal wheat pathogen Mycosphaerella graminicola reveals dispensome structure, chromosome plasticity, and stealth pathogenesis.</title>
        <authorList>
            <person name="Goodwin S.B."/>
            <person name="Ben M'barek S."/>
            <person name="Dhillon B."/>
            <person name="Wittenberg A.H.J."/>
            <person name="Crane C.F."/>
            <person name="Hane J.K."/>
            <person name="Foster A.J."/>
            <person name="Van der Lee T.A.J."/>
            <person name="Grimwood J."/>
            <person name="Aerts A."/>
            <person name="Antoniw J."/>
            <person name="Bailey A."/>
            <person name="Bluhm B."/>
            <person name="Bowler J."/>
            <person name="Bristow J."/>
            <person name="van der Burgt A."/>
            <person name="Canto-Canche B."/>
            <person name="Churchill A.C.L."/>
            <person name="Conde-Ferraez L."/>
            <person name="Cools H.J."/>
            <person name="Coutinho P.M."/>
            <person name="Csukai M."/>
            <person name="Dehal P."/>
            <person name="De Wit P."/>
            <person name="Donzelli B."/>
            <person name="van de Geest H.C."/>
            <person name="van Ham R.C.H.J."/>
            <person name="Hammond-Kosack K.E."/>
            <person name="Henrissat B."/>
            <person name="Kilian A."/>
            <person name="Kobayashi A.K."/>
            <person name="Koopmann E."/>
            <person name="Kourmpetis Y."/>
            <person name="Kuzniar A."/>
            <person name="Lindquist E."/>
            <person name="Lombard V."/>
            <person name="Maliepaard C."/>
            <person name="Martins N."/>
            <person name="Mehrabi R."/>
            <person name="Nap J.P.H."/>
            <person name="Ponomarenko A."/>
            <person name="Rudd J.J."/>
            <person name="Salamov A."/>
            <person name="Schmutz J."/>
            <person name="Schouten H.J."/>
            <person name="Shapiro H."/>
            <person name="Stergiopoulos I."/>
            <person name="Torriani S.F.F."/>
            <person name="Tu H."/>
            <person name="de Vries R.P."/>
            <person name="Waalwijk C."/>
            <person name="Ware S.B."/>
            <person name="Wiebenga A."/>
            <person name="Zwiers L.-H."/>
            <person name="Oliver R.P."/>
            <person name="Grigoriev I.V."/>
            <person name="Kema G.H.J."/>
        </authorList>
    </citation>
    <scope>NUCLEOTIDE SEQUENCE [LARGE SCALE GENOMIC DNA]</scope>
    <source>
        <strain>CBS 115943 / IPO323</strain>
    </source>
</reference>
<reference key="2">
    <citation type="journal article" date="2011" name="Plant Physiol.">
        <title>Analysis of two in planta expressed LysM effector homologs from the fungus Mycosphaerella graminicola reveals novel functional properties and varying contributions to virulence on wheat.</title>
        <authorList>
            <person name="Marshall R."/>
            <person name="Kombrink A."/>
            <person name="Motteram J."/>
            <person name="Loza-Reyes E."/>
            <person name="Lucas J."/>
            <person name="Hammond-Kosack K.E."/>
            <person name="Thomma B.P."/>
            <person name="Rudd J.J."/>
        </authorList>
    </citation>
    <scope>IDENTIFICATION</scope>
    <scope>DOMAIN</scope>
    <source>
        <strain>CBS 115943 / IPO323</strain>
    </source>
</reference>
<reference key="3">
    <citation type="journal article" date="2021" name="Mol. Plant Pathol.">
        <title>Three LysM effectors of Zymoseptoria tritici collectively disarm chitin-triggered plant immunity.</title>
        <authorList>
            <person name="Tian H."/>
            <person name="MacKenzie C.I."/>
            <person name="Rodriguez-Moreno L."/>
            <person name="van den Berg G.C.M."/>
            <person name="Chen H."/>
            <person name="Rudd J.J."/>
            <person name="Mesters J.R."/>
            <person name="Thomma B.P.H.J."/>
        </authorList>
    </citation>
    <scope>FUNCTION</scope>
    <scope>DISRUPTION PHENOTYPE</scope>
    <scope>CHITIN-BINDING</scope>
    <scope>SUBUNIT</scope>
    <scope>DOMAIN</scope>
    <source>
        <strain>CBS 115943 / IPO323</strain>
    </source>
</reference>
<name>LYSMX_ZYMTI</name>
<accession>P9WEM2</accession>